<proteinExistence type="inferred from homology"/>
<gene>
    <name evidence="1" type="primary">arnE</name>
    <name type="ordered locus">ECA3141</name>
</gene>
<comment type="function">
    <text evidence="1">Translocates 4-amino-4-deoxy-L-arabinose-phosphoundecaprenol (alpha-L-Ara4N-phosphoundecaprenol) from the cytoplasmic to the periplasmic side of the inner membrane.</text>
</comment>
<comment type="pathway">
    <text evidence="1">Bacterial outer membrane biogenesis; lipopolysaccharide biosynthesis.</text>
</comment>
<comment type="subunit">
    <text evidence="1">Heterodimer of ArnE and ArnF.</text>
</comment>
<comment type="subcellular location">
    <subcellularLocation>
        <location evidence="1">Cell inner membrane</location>
        <topology evidence="1">Multi-pass membrane protein</topology>
    </subcellularLocation>
</comment>
<comment type="similarity">
    <text evidence="1">Belongs to the ArnE family.</text>
</comment>
<organism>
    <name type="scientific">Pectobacterium atrosepticum (strain SCRI 1043 / ATCC BAA-672)</name>
    <name type="common">Erwinia carotovora subsp. atroseptica</name>
    <dbReference type="NCBI Taxonomy" id="218491"/>
    <lineage>
        <taxon>Bacteria</taxon>
        <taxon>Pseudomonadati</taxon>
        <taxon>Pseudomonadota</taxon>
        <taxon>Gammaproteobacteria</taxon>
        <taxon>Enterobacterales</taxon>
        <taxon>Pectobacteriaceae</taxon>
        <taxon>Pectobacterium</taxon>
    </lineage>
</organism>
<protein>
    <recommendedName>
        <fullName evidence="1">Probable 4-amino-4-deoxy-L-arabinose-phosphoundecaprenol flippase subunit ArnE</fullName>
        <shortName evidence="1">L-Ara4N-phosphoundecaprenol flippase subunit ArnE</shortName>
    </recommendedName>
    <alternativeName>
        <fullName evidence="1">Undecaprenyl phosphate-aminoarabinose flippase subunit ArnE</fullName>
    </alternativeName>
</protein>
<accession>Q6D2F4</accession>
<reference key="1">
    <citation type="journal article" date="2004" name="Proc. Natl. Acad. Sci. U.S.A.">
        <title>Genome sequence of the enterobacterial phytopathogen Erwinia carotovora subsp. atroseptica and characterization of virulence factors.</title>
        <authorList>
            <person name="Bell K.S."/>
            <person name="Sebaihia M."/>
            <person name="Pritchard L."/>
            <person name="Holden M.T.G."/>
            <person name="Hyman L.J."/>
            <person name="Holeva M.C."/>
            <person name="Thomson N.R."/>
            <person name="Bentley S.D."/>
            <person name="Churcher L.J.C."/>
            <person name="Mungall K."/>
            <person name="Atkin R."/>
            <person name="Bason N."/>
            <person name="Brooks K."/>
            <person name="Chillingworth T."/>
            <person name="Clark K."/>
            <person name="Doggett J."/>
            <person name="Fraser A."/>
            <person name="Hance Z."/>
            <person name="Hauser H."/>
            <person name="Jagels K."/>
            <person name="Moule S."/>
            <person name="Norbertczak H."/>
            <person name="Ormond D."/>
            <person name="Price C."/>
            <person name="Quail M.A."/>
            <person name="Sanders M."/>
            <person name="Walker D."/>
            <person name="Whitehead S."/>
            <person name="Salmond G.P.C."/>
            <person name="Birch P.R.J."/>
            <person name="Parkhill J."/>
            <person name="Toth I.K."/>
        </authorList>
    </citation>
    <scope>NUCLEOTIDE SEQUENCE [LARGE SCALE GENOMIC DNA]</scope>
    <source>
        <strain>SCRI 1043 / ATCC BAA-672</strain>
    </source>
</reference>
<evidence type="ECO:0000255" key="1">
    <source>
        <dbReference type="HAMAP-Rule" id="MF_01869"/>
    </source>
</evidence>
<dbReference type="EMBL" id="BX950851">
    <property type="protein sequence ID" value="CAG76040.1"/>
    <property type="molecule type" value="Genomic_DNA"/>
</dbReference>
<dbReference type="RefSeq" id="WP_011094664.1">
    <property type="nucleotide sequence ID" value="NC_004547.2"/>
</dbReference>
<dbReference type="STRING" id="218491.ECA3141"/>
<dbReference type="GeneID" id="57209826"/>
<dbReference type="KEGG" id="eca:ECA3141"/>
<dbReference type="eggNOG" id="COG2076">
    <property type="taxonomic scope" value="Bacteria"/>
</dbReference>
<dbReference type="HOGENOM" id="CLU_131462_5_1_6"/>
<dbReference type="OrthoDB" id="6058674at2"/>
<dbReference type="UniPathway" id="UPA00030"/>
<dbReference type="Proteomes" id="UP000007966">
    <property type="component" value="Chromosome"/>
</dbReference>
<dbReference type="GO" id="GO:0005886">
    <property type="term" value="C:plasma membrane"/>
    <property type="evidence" value="ECO:0007669"/>
    <property type="project" value="UniProtKB-SubCell"/>
</dbReference>
<dbReference type="GO" id="GO:1901505">
    <property type="term" value="F:carbohydrate derivative transmembrane transporter activity"/>
    <property type="evidence" value="ECO:0007669"/>
    <property type="project" value="InterPro"/>
</dbReference>
<dbReference type="GO" id="GO:0009245">
    <property type="term" value="P:lipid A biosynthetic process"/>
    <property type="evidence" value="ECO:0007669"/>
    <property type="project" value="UniProtKB-UniRule"/>
</dbReference>
<dbReference type="GO" id="GO:0009103">
    <property type="term" value="P:lipopolysaccharide biosynthetic process"/>
    <property type="evidence" value="ECO:0007669"/>
    <property type="project" value="UniProtKB-UniRule"/>
</dbReference>
<dbReference type="Gene3D" id="1.10.3730.20">
    <property type="match status" value="1"/>
</dbReference>
<dbReference type="HAMAP" id="MF_01869">
    <property type="entry name" value="Flippase_ArnE"/>
    <property type="match status" value="1"/>
</dbReference>
<dbReference type="InterPro" id="IPR000620">
    <property type="entry name" value="EamA_dom"/>
</dbReference>
<dbReference type="InterPro" id="IPR022883">
    <property type="entry name" value="Flippase_ArnE"/>
</dbReference>
<dbReference type="InterPro" id="IPR000390">
    <property type="entry name" value="Small_drug/metabolite_transptr"/>
</dbReference>
<dbReference type="NCBIfam" id="NF011625">
    <property type="entry name" value="PRK15051.1"/>
    <property type="match status" value="1"/>
</dbReference>
<dbReference type="PANTHER" id="PTHR30561:SF23">
    <property type="entry name" value="4-AMINO-4-DEOXY-L-ARABINOSE-PHOSPHOUNDECAPRENOL FLIPPASE SUBUNIT ARNE-RELATED"/>
    <property type="match status" value="1"/>
</dbReference>
<dbReference type="PANTHER" id="PTHR30561">
    <property type="entry name" value="SMR FAMILY PROTON-DEPENDENT DRUG EFFLUX TRANSPORTER SUGE"/>
    <property type="match status" value="1"/>
</dbReference>
<dbReference type="Pfam" id="PF00892">
    <property type="entry name" value="EamA"/>
    <property type="match status" value="1"/>
</dbReference>
<dbReference type="SUPFAM" id="SSF103481">
    <property type="entry name" value="Multidrug resistance efflux transporter EmrE"/>
    <property type="match status" value="1"/>
</dbReference>
<keyword id="KW-0997">Cell inner membrane</keyword>
<keyword id="KW-1003">Cell membrane</keyword>
<keyword id="KW-0441">Lipid A biosynthesis</keyword>
<keyword id="KW-0444">Lipid biosynthesis</keyword>
<keyword id="KW-0443">Lipid metabolism</keyword>
<keyword id="KW-0448">Lipopolysaccharide biosynthesis</keyword>
<keyword id="KW-0472">Membrane</keyword>
<keyword id="KW-1185">Reference proteome</keyword>
<keyword id="KW-0812">Transmembrane</keyword>
<keyword id="KW-1133">Transmembrane helix</keyword>
<keyword id="KW-0813">Transport</keyword>
<feature type="chain" id="PRO_0000382954" description="Probable 4-amino-4-deoxy-L-arabinose-phosphoundecaprenol flippase subunit ArnE">
    <location>
        <begin position="1"/>
        <end position="113"/>
    </location>
</feature>
<feature type="transmembrane region" description="Helical" evidence="1">
    <location>
        <begin position="40"/>
        <end position="60"/>
    </location>
</feature>
<feature type="transmembrane region" description="Helical" evidence="1">
    <location>
        <begin position="64"/>
        <end position="84"/>
    </location>
</feature>
<feature type="transmembrane region" description="Helical" evidence="1">
    <location>
        <begin position="92"/>
        <end position="112"/>
    </location>
</feature>
<name>ARNE_PECAS</name>
<sequence length="113" mass="12779">MSYLLVAIVCLLTSLGQLCQKQAAECWRRLPVAQRQRVTFGWLMLAALLLGIGLLLWLLVLQHLPLGVAYPLLSINFVLVTLLAHYGFGERVDRHHWWGIALIVIGIYLMQGE</sequence>